<gene>
    <name evidence="1" type="primary">gcvT</name>
    <name type="ordered locus">SPC_3115</name>
</gene>
<keyword id="KW-0032">Aminotransferase</keyword>
<keyword id="KW-0808">Transferase</keyword>
<sequence length="364" mass="40218">MAQQTPLYEQHTLCGARMVDFHGWMMPLHYGSQLDEHHAVRTDAGMFDVSHMTIVDLHGSRTREFLRYLLANDVAKLTKTGKALYSGMLNASGGVIDDLIVYYFTEDFFRLVVNSATREKDLSWITQHAEPYAIDITVRDDLSLIAVQGPNAQEKAATLFTDEQRHAVEGMKPFFGVQAGDLFIATTGYTGEAGYEIAMPNEKAADFWRALVEAGVKPCGLGARDTLRLEAGMNLYGQEMDEGISPLAANMGWTIAWEPADRDFIGREALEMQREKGHEQLVGLVMTEKGVLRNELPVRFTDAQGNQQEGIITSGTFSPTLGYSIALARVPAGIGETAIVQIRNREMPVKVTKPVFVRNGKAVA</sequence>
<comment type="function">
    <text evidence="1">The glycine cleavage system catalyzes the degradation of glycine.</text>
</comment>
<comment type="catalytic activity">
    <reaction evidence="1">
        <text>N(6)-[(R)-S(8)-aminomethyldihydrolipoyl]-L-lysyl-[protein] + (6S)-5,6,7,8-tetrahydrofolate = N(6)-[(R)-dihydrolipoyl]-L-lysyl-[protein] + (6R)-5,10-methylene-5,6,7,8-tetrahydrofolate + NH4(+)</text>
        <dbReference type="Rhea" id="RHEA:16945"/>
        <dbReference type="Rhea" id="RHEA-COMP:10475"/>
        <dbReference type="Rhea" id="RHEA-COMP:10492"/>
        <dbReference type="ChEBI" id="CHEBI:15636"/>
        <dbReference type="ChEBI" id="CHEBI:28938"/>
        <dbReference type="ChEBI" id="CHEBI:57453"/>
        <dbReference type="ChEBI" id="CHEBI:83100"/>
        <dbReference type="ChEBI" id="CHEBI:83143"/>
        <dbReference type="EC" id="2.1.2.10"/>
    </reaction>
</comment>
<comment type="subunit">
    <text evidence="1">The glycine cleavage system is composed of four proteins: P, T, L and H.</text>
</comment>
<comment type="similarity">
    <text evidence="1">Belongs to the GcvT family.</text>
</comment>
<protein>
    <recommendedName>
        <fullName evidence="1">Aminomethyltransferase</fullName>
        <ecNumber evidence="1">2.1.2.10</ecNumber>
    </recommendedName>
    <alternativeName>
        <fullName evidence="1">Glycine cleavage system T protein</fullName>
    </alternativeName>
</protein>
<accession>C0PY28</accession>
<name>GCST_SALPC</name>
<proteinExistence type="inferred from homology"/>
<dbReference type="EC" id="2.1.2.10" evidence="1"/>
<dbReference type="EMBL" id="CP000857">
    <property type="protein sequence ID" value="ACN47202.1"/>
    <property type="molecule type" value="Genomic_DNA"/>
</dbReference>
<dbReference type="RefSeq" id="WP_000068733.1">
    <property type="nucleotide sequence ID" value="NC_012125.1"/>
</dbReference>
<dbReference type="SMR" id="C0PY28"/>
<dbReference type="KEGG" id="sei:SPC_3115"/>
<dbReference type="HOGENOM" id="CLU_007884_10_2_6"/>
<dbReference type="Proteomes" id="UP000001599">
    <property type="component" value="Chromosome"/>
</dbReference>
<dbReference type="GO" id="GO:0005829">
    <property type="term" value="C:cytosol"/>
    <property type="evidence" value="ECO:0007669"/>
    <property type="project" value="TreeGrafter"/>
</dbReference>
<dbReference type="GO" id="GO:0005960">
    <property type="term" value="C:glycine cleavage complex"/>
    <property type="evidence" value="ECO:0007669"/>
    <property type="project" value="InterPro"/>
</dbReference>
<dbReference type="GO" id="GO:0004047">
    <property type="term" value="F:aminomethyltransferase activity"/>
    <property type="evidence" value="ECO:0007669"/>
    <property type="project" value="UniProtKB-UniRule"/>
</dbReference>
<dbReference type="GO" id="GO:0008483">
    <property type="term" value="F:transaminase activity"/>
    <property type="evidence" value="ECO:0007669"/>
    <property type="project" value="UniProtKB-KW"/>
</dbReference>
<dbReference type="GO" id="GO:0019464">
    <property type="term" value="P:glycine decarboxylation via glycine cleavage system"/>
    <property type="evidence" value="ECO:0007669"/>
    <property type="project" value="UniProtKB-UniRule"/>
</dbReference>
<dbReference type="FunFam" id="2.40.30.110:FF:000001">
    <property type="entry name" value="Aminomethyltransferase"/>
    <property type="match status" value="1"/>
</dbReference>
<dbReference type="FunFam" id="3.30.70.1400:FF:000001">
    <property type="entry name" value="Aminomethyltransferase"/>
    <property type="match status" value="1"/>
</dbReference>
<dbReference type="FunFam" id="4.10.1250.10:FF:000001">
    <property type="entry name" value="Aminomethyltransferase"/>
    <property type="match status" value="1"/>
</dbReference>
<dbReference type="Gene3D" id="2.40.30.110">
    <property type="entry name" value="Aminomethyltransferase beta-barrel domains"/>
    <property type="match status" value="1"/>
</dbReference>
<dbReference type="Gene3D" id="3.30.70.1400">
    <property type="entry name" value="Aminomethyltransferase beta-barrel domains"/>
    <property type="match status" value="1"/>
</dbReference>
<dbReference type="Gene3D" id="4.10.1250.10">
    <property type="entry name" value="Aminomethyltransferase fragment"/>
    <property type="match status" value="1"/>
</dbReference>
<dbReference type="Gene3D" id="3.30.1360.120">
    <property type="entry name" value="Probable tRNA modification gtpase trme, domain 1"/>
    <property type="match status" value="1"/>
</dbReference>
<dbReference type="HAMAP" id="MF_00259">
    <property type="entry name" value="GcvT"/>
    <property type="match status" value="1"/>
</dbReference>
<dbReference type="InterPro" id="IPR006223">
    <property type="entry name" value="GCS_T"/>
</dbReference>
<dbReference type="InterPro" id="IPR022903">
    <property type="entry name" value="GCS_T_bac"/>
</dbReference>
<dbReference type="InterPro" id="IPR013977">
    <property type="entry name" value="GCST_C"/>
</dbReference>
<dbReference type="InterPro" id="IPR006222">
    <property type="entry name" value="GCV_T_N"/>
</dbReference>
<dbReference type="InterPro" id="IPR028896">
    <property type="entry name" value="GcvT/YgfZ/DmdA"/>
</dbReference>
<dbReference type="InterPro" id="IPR029043">
    <property type="entry name" value="GcvT/YgfZ_C"/>
</dbReference>
<dbReference type="InterPro" id="IPR027266">
    <property type="entry name" value="TrmE/GcvT_dom1"/>
</dbReference>
<dbReference type="NCBIfam" id="TIGR00528">
    <property type="entry name" value="gcvT"/>
    <property type="match status" value="1"/>
</dbReference>
<dbReference type="NCBIfam" id="NF001567">
    <property type="entry name" value="PRK00389.1"/>
    <property type="match status" value="1"/>
</dbReference>
<dbReference type="PANTHER" id="PTHR43757">
    <property type="entry name" value="AMINOMETHYLTRANSFERASE"/>
    <property type="match status" value="1"/>
</dbReference>
<dbReference type="PANTHER" id="PTHR43757:SF2">
    <property type="entry name" value="AMINOMETHYLTRANSFERASE, MITOCHONDRIAL"/>
    <property type="match status" value="1"/>
</dbReference>
<dbReference type="Pfam" id="PF01571">
    <property type="entry name" value="GCV_T"/>
    <property type="match status" value="1"/>
</dbReference>
<dbReference type="Pfam" id="PF08669">
    <property type="entry name" value="GCV_T_C"/>
    <property type="match status" value="1"/>
</dbReference>
<dbReference type="PIRSF" id="PIRSF006487">
    <property type="entry name" value="GcvT"/>
    <property type="match status" value="1"/>
</dbReference>
<dbReference type="SUPFAM" id="SSF101790">
    <property type="entry name" value="Aminomethyltransferase beta-barrel domain"/>
    <property type="match status" value="1"/>
</dbReference>
<dbReference type="SUPFAM" id="SSF103025">
    <property type="entry name" value="Folate-binding domain"/>
    <property type="match status" value="1"/>
</dbReference>
<feature type="chain" id="PRO_1000125644" description="Aminomethyltransferase">
    <location>
        <begin position="1"/>
        <end position="364"/>
    </location>
</feature>
<reference key="1">
    <citation type="journal article" date="2009" name="PLoS ONE">
        <title>Salmonella paratyphi C: genetic divergence from Salmonella choleraesuis and pathogenic convergence with Salmonella typhi.</title>
        <authorList>
            <person name="Liu W.-Q."/>
            <person name="Feng Y."/>
            <person name="Wang Y."/>
            <person name="Zou Q.-H."/>
            <person name="Chen F."/>
            <person name="Guo J.-T."/>
            <person name="Peng Y.-H."/>
            <person name="Jin Y."/>
            <person name="Li Y.-G."/>
            <person name="Hu S.-N."/>
            <person name="Johnston R.N."/>
            <person name="Liu G.-R."/>
            <person name="Liu S.-L."/>
        </authorList>
    </citation>
    <scope>NUCLEOTIDE SEQUENCE [LARGE SCALE GENOMIC DNA]</scope>
    <source>
        <strain>RKS4594</strain>
    </source>
</reference>
<organism>
    <name type="scientific">Salmonella paratyphi C (strain RKS4594)</name>
    <dbReference type="NCBI Taxonomy" id="476213"/>
    <lineage>
        <taxon>Bacteria</taxon>
        <taxon>Pseudomonadati</taxon>
        <taxon>Pseudomonadota</taxon>
        <taxon>Gammaproteobacteria</taxon>
        <taxon>Enterobacterales</taxon>
        <taxon>Enterobacteriaceae</taxon>
        <taxon>Salmonella</taxon>
    </lineage>
</organism>
<evidence type="ECO:0000255" key="1">
    <source>
        <dbReference type="HAMAP-Rule" id="MF_00259"/>
    </source>
</evidence>